<proteinExistence type="inferred from homology"/>
<feature type="chain" id="PRO_1000000691" description="Thymidylate synthase">
    <location>
        <begin position="1"/>
        <end position="279"/>
    </location>
</feature>
<feature type="active site" description="Nucleophile" evidence="1">
    <location>
        <position position="154"/>
    </location>
</feature>
<feature type="binding site" evidence="1">
    <location>
        <begin position="133"/>
        <end position="134"/>
    </location>
    <ligand>
        <name>dUMP</name>
        <dbReference type="ChEBI" id="CHEBI:246422"/>
        <note>ligand shared between dimeric partners</note>
    </ligand>
</feature>
<feature type="binding site" description="in other chain" evidence="1">
    <location>
        <begin position="178"/>
        <end position="181"/>
    </location>
    <ligand>
        <name>dUMP</name>
        <dbReference type="ChEBI" id="CHEBI:246422"/>
        <note>ligand shared between dimeric partners</note>
    </ligand>
</feature>
<feature type="binding site" evidence="1">
    <location>
        <position position="181"/>
    </location>
    <ligand>
        <name>(6R)-5,10-methylene-5,6,7,8-tetrahydrofolate</name>
        <dbReference type="ChEBI" id="CHEBI:15636"/>
    </ligand>
</feature>
<feature type="binding site" description="in other chain" evidence="1">
    <location>
        <position position="189"/>
    </location>
    <ligand>
        <name>dUMP</name>
        <dbReference type="ChEBI" id="CHEBI:246422"/>
        <note>ligand shared between dimeric partners</note>
    </ligand>
</feature>
<feature type="binding site" description="in other chain" evidence="1">
    <location>
        <begin position="219"/>
        <end position="221"/>
    </location>
    <ligand>
        <name>dUMP</name>
        <dbReference type="ChEBI" id="CHEBI:246422"/>
        <note>ligand shared between dimeric partners</note>
    </ligand>
</feature>
<feature type="binding site" evidence="1">
    <location>
        <position position="278"/>
    </location>
    <ligand>
        <name>(6R)-5,10-methylene-5,6,7,8-tetrahydrofolate</name>
        <dbReference type="ChEBI" id="CHEBI:15636"/>
    </ligand>
</feature>
<evidence type="ECO:0000255" key="1">
    <source>
        <dbReference type="HAMAP-Rule" id="MF_00008"/>
    </source>
</evidence>
<accession>Q3K0J7</accession>
<sequence>MTKADLLFKDNITKIMSEGVFSEQARPRYKNGEMANSKYITGAFAEYDLSKGEFPITTLRPIPIKSAIKEIFWIYQDQTNDLVVLNDKYGVTYWNDWEVGHTGTIGQRYGAVVKKHNIISKLLKQLEDNPWNRRNVISLWDYEAFEETEGLLPCAFQTMFDVRRVNGELYLDATLTQRSNDMLVAHHINAMQYVALQMMIAKHFGWRVGKFFYFINNLHIYDNQFEQAQELLKRQPSECNPKLVLNVPDGTDFFDIKPDDFALVDYDPIKPQLRFDLAI</sequence>
<reference key="1">
    <citation type="journal article" date="2005" name="Proc. Natl. Acad. Sci. U.S.A.">
        <title>Genome analysis of multiple pathogenic isolates of Streptococcus agalactiae: implications for the microbial 'pan-genome'.</title>
        <authorList>
            <person name="Tettelin H."/>
            <person name="Masignani V."/>
            <person name="Cieslewicz M.J."/>
            <person name="Donati C."/>
            <person name="Medini D."/>
            <person name="Ward N.L."/>
            <person name="Angiuoli S.V."/>
            <person name="Crabtree J."/>
            <person name="Jones A.L."/>
            <person name="Durkin A.S."/>
            <person name="DeBoy R.T."/>
            <person name="Davidsen T.M."/>
            <person name="Mora M."/>
            <person name="Scarselli M."/>
            <person name="Margarit y Ros I."/>
            <person name="Peterson J.D."/>
            <person name="Hauser C.R."/>
            <person name="Sundaram J.P."/>
            <person name="Nelson W.C."/>
            <person name="Madupu R."/>
            <person name="Brinkac L.M."/>
            <person name="Dodson R.J."/>
            <person name="Rosovitz M.J."/>
            <person name="Sullivan S.A."/>
            <person name="Daugherty S.C."/>
            <person name="Haft D.H."/>
            <person name="Selengut J."/>
            <person name="Gwinn M.L."/>
            <person name="Zhou L."/>
            <person name="Zafar N."/>
            <person name="Khouri H."/>
            <person name="Radune D."/>
            <person name="Dimitrov G."/>
            <person name="Watkins K."/>
            <person name="O'Connor K.J."/>
            <person name="Smith S."/>
            <person name="Utterback T.R."/>
            <person name="White O."/>
            <person name="Rubens C.E."/>
            <person name="Grandi G."/>
            <person name="Madoff L.C."/>
            <person name="Kasper D.L."/>
            <person name="Telford J.L."/>
            <person name="Wessels M.R."/>
            <person name="Rappuoli R."/>
            <person name="Fraser C.M."/>
        </authorList>
    </citation>
    <scope>NUCLEOTIDE SEQUENCE [LARGE SCALE GENOMIC DNA]</scope>
    <source>
        <strain>ATCC 27591 / A909 / CDC SS700</strain>
    </source>
</reference>
<comment type="function">
    <text evidence="1">Catalyzes the reductive methylation of 2'-deoxyuridine-5'-monophosphate (dUMP) to 2'-deoxythymidine-5'-monophosphate (dTMP) while utilizing 5,10-methylenetetrahydrofolate (mTHF) as the methyl donor and reductant in the reaction, yielding dihydrofolate (DHF) as a by-product. This enzymatic reaction provides an intracellular de novo source of dTMP, an essential precursor for DNA biosynthesis.</text>
</comment>
<comment type="catalytic activity">
    <reaction evidence="1">
        <text>dUMP + (6R)-5,10-methylene-5,6,7,8-tetrahydrofolate = 7,8-dihydrofolate + dTMP</text>
        <dbReference type="Rhea" id="RHEA:12104"/>
        <dbReference type="ChEBI" id="CHEBI:15636"/>
        <dbReference type="ChEBI" id="CHEBI:57451"/>
        <dbReference type="ChEBI" id="CHEBI:63528"/>
        <dbReference type="ChEBI" id="CHEBI:246422"/>
        <dbReference type="EC" id="2.1.1.45"/>
    </reaction>
</comment>
<comment type="pathway">
    <text evidence="1">Pyrimidine metabolism; dTTP biosynthesis.</text>
</comment>
<comment type="subunit">
    <text evidence="1">Homodimer.</text>
</comment>
<comment type="subcellular location">
    <subcellularLocation>
        <location evidence="1">Cytoplasm</location>
    </subcellularLocation>
</comment>
<comment type="similarity">
    <text evidence="1">Belongs to the thymidylate synthase family. Bacterial-type ThyA subfamily.</text>
</comment>
<keyword id="KW-0963">Cytoplasm</keyword>
<keyword id="KW-0489">Methyltransferase</keyword>
<keyword id="KW-0545">Nucleotide biosynthesis</keyword>
<keyword id="KW-0808">Transferase</keyword>
<name>TYSY_STRA1</name>
<gene>
    <name evidence="1" type="primary">thyA</name>
    <name type="ordered locus">SAK_1346</name>
</gene>
<dbReference type="EC" id="2.1.1.45" evidence="1"/>
<dbReference type="EMBL" id="CP000114">
    <property type="protein sequence ID" value="ABA45602.1"/>
    <property type="molecule type" value="Genomic_DNA"/>
</dbReference>
<dbReference type="RefSeq" id="WP_000158597.1">
    <property type="nucleotide sequence ID" value="NC_007432.1"/>
</dbReference>
<dbReference type="SMR" id="Q3K0J7"/>
<dbReference type="KEGG" id="sak:SAK_1346"/>
<dbReference type="HOGENOM" id="CLU_021669_0_0_9"/>
<dbReference type="UniPathway" id="UPA00575"/>
<dbReference type="GO" id="GO:0005829">
    <property type="term" value="C:cytosol"/>
    <property type="evidence" value="ECO:0007669"/>
    <property type="project" value="TreeGrafter"/>
</dbReference>
<dbReference type="GO" id="GO:0004799">
    <property type="term" value="F:thymidylate synthase activity"/>
    <property type="evidence" value="ECO:0007669"/>
    <property type="project" value="UniProtKB-UniRule"/>
</dbReference>
<dbReference type="GO" id="GO:0006231">
    <property type="term" value="P:dTMP biosynthetic process"/>
    <property type="evidence" value="ECO:0007669"/>
    <property type="project" value="UniProtKB-UniRule"/>
</dbReference>
<dbReference type="GO" id="GO:0006235">
    <property type="term" value="P:dTTP biosynthetic process"/>
    <property type="evidence" value="ECO:0007669"/>
    <property type="project" value="UniProtKB-UniRule"/>
</dbReference>
<dbReference type="GO" id="GO:0032259">
    <property type="term" value="P:methylation"/>
    <property type="evidence" value="ECO:0007669"/>
    <property type="project" value="UniProtKB-KW"/>
</dbReference>
<dbReference type="CDD" id="cd00351">
    <property type="entry name" value="TS_Pyrimidine_HMase"/>
    <property type="match status" value="1"/>
</dbReference>
<dbReference type="Gene3D" id="3.30.572.10">
    <property type="entry name" value="Thymidylate synthase/dCMP hydroxymethylase domain"/>
    <property type="match status" value="1"/>
</dbReference>
<dbReference type="HAMAP" id="MF_00008">
    <property type="entry name" value="Thymidy_synth_bact"/>
    <property type="match status" value="1"/>
</dbReference>
<dbReference type="InterPro" id="IPR045097">
    <property type="entry name" value="Thymidate_synth/dCMP_Mease"/>
</dbReference>
<dbReference type="InterPro" id="IPR023451">
    <property type="entry name" value="Thymidate_synth/dCMP_Mease_dom"/>
</dbReference>
<dbReference type="InterPro" id="IPR036926">
    <property type="entry name" value="Thymidate_synth/dCMP_Mease_sf"/>
</dbReference>
<dbReference type="InterPro" id="IPR000398">
    <property type="entry name" value="Thymidylate_synthase"/>
</dbReference>
<dbReference type="InterPro" id="IPR020940">
    <property type="entry name" value="Thymidylate_synthase_AS"/>
</dbReference>
<dbReference type="NCBIfam" id="NF002495">
    <property type="entry name" value="PRK01827.1-1"/>
    <property type="match status" value="1"/>
</dbReference>
<dbReference type="PANTHER" id="PTHR11548">
    <property type="entry name" value="THYMIDYLATE SYNTHASE 1"/>
    <property type="match status" value="1"/>
</dbReference>
<dbReference type="PANTHER" id="PTHR11548:SF1">
    <property type="entry name" value="THYMIDYLATE SYNTHASE 1"/>
    <property type="match status" value="1"/>
</dbReference>
<dbReference type="Pfam" id="PF00303">
    <property type="entry name" value="Thymidylat_synt"/>
    <property type="match status" value="1"/>
</dbReference>
<dbReference type="PRINTS" id="PR00108">
    <property type="entry name" value="THYMDSNTHASE"/>
</dbReference>
<dbReference type="SUPFAM" id="SSF55831">
    <property type="entry name" value="Thymidylate synthase/dCMP hydroxymethylase"/>
    <property type="match status" value="1"/>
</dbReference>
<dbReference type="PROSITE" id="PS00091">
    <property type="entry name" value="THYMIDYLATE_SYNTHASE"/>
    <property type="match status" value="1"/>
</dbReference>
<protein>
    <recommendedName>
        <fullName evidence="1">Thymidylate synthase</fullName>
        <shortName evidence="1">TS</shortName>
        <shortName evidence="1">TSase</shortName>
        <ecNumber evidence="1">2.1.1.45</ecNumber>
    </recommendedName>
</protein>
<organism>
    <name type="scientific">Streptococcus agalactiae serotype Ia (strain ATCC 27591 / A909 / CDC SS700)</name>
    <dbReference type="NCBI Taxonomy" id="205921"/>
    <lineage>
        <taxon>Bacteria</taxon>
        <taxon>Bacillati</taxon>
        <taxon>Bacillota</taxon>
        <taxon>Bacilli</taxon>
        <taxon>Lactobacillales</taxon>
        <taxon>Streptococcaceae</taxon>
        <taxon>Streptococcus</taxon>
    </lineage>
</organism>